<evidence type="ECO:0000250" key="1"/>
<evidence type="ECO:0000250" key="2">
    <source>
        <dbReference type="UniProtKB" id="Q80T69"/>
    </source>
</evidence>
<evidence type="ECO:0000250" key="3">
    <source>
        <dbReference type="UniProtKB" id="Q9GRZ3"/>
    </source>
</evidence>
<evidence type="ECO:0000255" key="4"/>
<evidence type="ECO:0000256" key="5">
    <source>
        <dbReference type="SAM" id="MobiDB-lite"/>
    </source>
</evidence>
<evidence type="ECO:0000303" key="6">
    <source>
    </source>
</evidence>
<evidence type="ECO:0000305" key="7"/>
<evidence type="ECO:0007744" key="8">
    <source>
    </source>
</evidence>
<evidence type="ECO:0007744" key="9">
    <source>
    </source>
</evidence>
<evidence type="ECO:0007744" key="10">
    <source>
    </source>
</evidence>
<comment type="function">
    <text evidence="2">Histone demethylase that specifically demethylates dimethylated 'Lys-20' of histone H4 (H4K20me2), thereby modulating chromosome architecture.</text>
</comment>
<comment type="cofactor">
    <cofactor evidence="2">
        <name>Fe(2+)</name>
        <dbReference type="ChEBI" id="CHEBI:29033"/>
    </cofactor>
    <text evidence="3">Binds 1 Fe(2+) ion per subunit.</text>
</comment>
<comment type="subcellular location">
    <subcellularLocation>
        <location evidence="1">Nucleus</location>
    </subcellularLocation>
</comment>
<comment type="alternative products">
    <event type="alternative splicing"/>
    <isoform>
        <id>Q5VWQ0-1</id>
        <name>1</name>
        <sequence type="displayed"/>
    </isoform>
    <isoform>
        <id>Q5VWQ0-4</id>
        <name>4</name>
        <sequence type="described" ref="VSP_027656"/>
    </isoform>
</comment>
<comment type="PTM">
    <text evidence="1">Phosphorylated by PKA.</text>
</comment>
<comment type="similarity">
    <text evidence="7">Belongs to the round spermatid basic protein 1 family.</text>
</comment>
<comment type="sequence caution" evidence="7">
    <conflict type="erroneous initiation">
        <sequence resource="EMBL-CDS" id="AAH26155"/>
    </conflict>
</comment>
<comment type="sequence caution" evidence="7">
    <conflict type="erroneous initiation">
        <sequence resource="EMBL-CDS" id="BAA92075"/>
    </conflict>
</comment>
<comment type="sequence caution" evidence="7">
    <conflict type="erroneous initiation">
        <sequence resource="EMBL-CDS" id="BAB13974"/>
    </conflict>
</comment>
<comment type="sequence caution" evidence="7">
    <conflict type="erroneous initiation">
        <sequence resource="EMBL-CDS" id="CAH10493"/>
    </conflict>
    <text>Truncated N-terminus.</text>
</comment>
<comment type="sequence caution" evidence="7">
    <conflict type="miscellaneous discrepancy">
        <sequence resource="EMBL-CDS" id="CAH10493"/>
    </conflict>
    <text>Aberrant splicing.</text>
</comment>
<gene>
    <name type="primary">RSBN1</name>
</gene>
<sequence length="802" mass="90072">MFISGRRTADKWRAEERLQCPAGSARAALARCADGGAVGPFKCVFVGEMAAQVGAVRVVRAVAAQEEPDKEGKEKPHAGVSPRGVKRQRRSSSGGSQEKRGRPSQEPPLAPPHRRRRSRQHPGPLPPTNAAPTVPGPVEPLLLPPPPPPSLAPAGPAVAAPLPAPSTSALFTFSPLTVSAAGPKHKGHKERHKHHHHRGPDGDPSSCGTDLKHKDKQENGERTGGVPLIKAPKRETPDENGKTQRADDFVLKKIKKKKKKKHREDMRGRRLKMYNKEVQTVCAGLTRISKEILTQGQINSTSGLNKESFRYLKDEQLCRLNLGMQEYRVPQGVQTPFMTHQEHSIRRNFLKTGTKFSNFIHEEHQSNGGALVLHAYMDELSFLSPMEMERFSEEFLALTFSENEKNAAYYALAIVHGAAAYLPDFLDYFAFNFPNTPVKMEILGKKDIETTTISNFHTQVNRTYCCGTYRAGPMRQISLVGAVDEEVGDYFPEFLDMLEESPFLKMTLPWGTLSSLRLQCRSQSDDGPIMWVRPGEQMIPTADMPKSPFKRRRSMNEIKNLQYLPRTSEPREVLFEDRTRAHADHVGQGFDWQSTAAVGVLKAVQFGEWSDQPRITKDVICFHAEDFTDVVQRLQLDLHEPPVSQCVQWVDEAKLNQMRREGIRYARIQLCDNDIYFIPRNVIHQFKTVSAVCSLAWHIRLKQYHPVVEATQNTESNSNMDCGLTGKRELEVDSQCVRIKTESEEACTEIQLLTTASSSFPPASELNLQQDQKTQPIPVLKVESRLDSDQQHNLQEHSTTSV</sequence>
<name>RSBN1_HUMAN</name>
<organism>
    <name type="scientific">Homo sapiens</name>
    <name type="common">Human</name>
    <dbReference type="NCBI Taxonomy" id="9606"/>
    <lineage>
        <taxon>Eukaryota</taxon>
        <taxon>Metazoa</taxon>
        <taxon>Chordata</taxon>
        <taxon>Craniata</taxon>
        <taxon>Vertebrata</taxon>
        <taxon>Euteleostomi</taxon>
        <taxon>Mammalia</taxon>
        <taxon>Eutheria</taxon>
        <taxon>Euarchontoglires</taxon>
        <taxon>Primates</taxon>
        <taxon>Haplorrhini</taxon>
        <taxon>Catarrhini</taxon>
        <taxon>Hominidae</taxon>
        <taxon>Homo</taxon>
    </lineage>
</organism>
<feature type="chain" id="PRO_0000299412" description="Lysine-specific demethylase 9">
    <location>
        <begin position="1"/>
        <end position="802"/>
    </location>
</feature>
<feature type="region of interest" description="Disordered" evidence="5">
    <location>
        <begin position="65"/>
        <end position="244"/>
    </location>
</feature>
<feature type="short sequence motif" description="Nuclear localization signal" evidence="4">
    <location>
        <begin position="252"/>
        <end position="263"/>
    </location>
</feature>
<feature type="compositionally biased region" description="Pro residues" evidence="5">
    <location>
        <begin position="123"/>
        <end position="151"/>
    </location>
</feature>
<feature type="compositionally biased region" description="Low complexity" evidence="5">
    <location>
        <begin position="152"/>
        <end position="170"/>
    </location>
</feature>
<feature type="compositionally biased region" description="Basic residues" evidence="5">
    <location>
        <begin position="183"/>
        <end position="198"/>
    </location>
</feature>
<feature type="compositionally biased region" description="Basic and acidic residues" evidence="5">
    <location>
        <begin position="210"/>
        <end position="221"/>
    </location>
</feature>
<feature type="compositionally biased region" description="Basic and acidic residues" evidence="5">
    <location>
        <begin position="232"/>
        <end position="244"/>
    </location>
</feature>
<feature type="binding site" evidence="3">
    <location>
        <position position="579"/>
    </location>
    <ligand>
        <name>2-oxoglutarate</name>
        <dbReference type="ChEBI" id="CHEBI:16810"/>
    </ligand>
</feature>
<feature type="binding site" evidence="3">
    <location>
        <position position="582"/>
    </location>
    <ligand>
        <name>Fe cation</name>
        <dbReference type="ChEBI" id="CHEBI:24875"/>
        <note>catalytic</note>
    </ligand>
</feature>
<feature type="binding site" evidence="3">
    <location>
        <position position="584"/>
    </location>
    <ligand>
        <name>Fe cation</name>
        <dbReference type="ChEBI" id="CHEBI:24875"/>
        <note>catalytic</note>
    </ligand>
</feature>
<feature type="binding site" evidence="3">
    <location>
        <position position="676"/>
    </location>
    <ligand>
        <name>2-oxoglutarate</name>
        <dbReference type="ChEBI" id="CHEBI:16810"/>
    </ligand>
</feature>
<feature type="binding site" evidence="3">
    <location>
        <position position="684"/>
    </location>
    <ligand>
        <name>Fe cation</name>
        <dbReference type="ChEBI" id="CHEBI:24875"/>
        <note>catalytic</note>
    </ligand>
</feature>
<feature type="modified residue" description="Phosphoserine" evidence="8">
    <location>
        <position position="81"/>
    </location>
</feature>
<feature type="cross-link" description="Glycyl lysine isopeptide (Lys-Gly) (interchain with G-Cter in SUMO2)" evidence="10">
    <location>
        <position position="290"/>
    </location>
</feature>
<feature type="cross-link" description="Glycyl lysine isopeptide (Lys-Gly) (interchain with G-Cter in SUMO2)" evidence="10">
    <location>
        <position position="313"/>
    </location>
</feature>
<feature type="cross-link" description="Glycyl lysine isopeptide (Lys-Gly) (interchain with G-Cter in SUMO2)" evidence="10">
    <location>
        <position position="740"/>
    </location>
</feature>
<feature type="cross-link" description="Glycyl lysine isopeptide (Lys-Gly) (interchain with G-Cter in SUMO2)" evidence="9 10">
    <location>
        <position position="781"/>
    </location>
</feature>
<feature type="splice variant" id="VSP_027656" description="In isoform 4." evidence="6">
    <location>
        <begin position="460"/>
        <end position="802"/>
    </location>
</feature>
<feature type="sequence conflict" description="In Ref. 3; AAH26155." evidence="7" ref="3">
    <original>GP</original>
    <variation>SG</variation>
    <location>
        <begin position="39"/>
        <end position="40"/>
    </location>
</feature>
<feature type="sequence conflict" description="In Ref. 1; BAF85241." evidence="7" ref="1">
    <original>E</original>
    <variation>G</variation>
    <location>
        <position position="106"/>
    </location>
</feature>
<feature type="sequence conflict" description="In Ref. 1; BAA92075." evidence="7" ref="1">
    <original>Q</original>
    <variation>R</variation>
    <location>
        <position position="120"/>
    </location>
</feature>
<dbReference type="EC" id="1.14.11.-" evidence="2"/>
<dbReference type="EMBL" id="AK002082">
    <property type="protein sequence ID" value="BAA92075.1"/>
    <property type="status" value="ALT_INIT"/>
    <property type="molecule type" value="mRNA"/>
</dbReference>
<dbReference type="EMBL" id="AK292552">
    <property type="protein sequence ID" value="BAF85241.1"/>
    <property type="molecule type" value="mRNA"/>
</dbReference>
<dbReference type="EMBL" id="AK022166">
    <property type="protein sequence ID" value="BAB13974.1"/>
    <property type="status" value="ALT_INIT"/>
    <property type="molecule type" value="mRNA"/>
</dbReference>
<dbReference type="EMBL" id="AL137856">
    <property type="status" value="NOT_ANNOTATED_CDS"/>
    <property type="molecule type" value="Genomic_DNA"/>
</dbReference>
<dbReference type="EMBL" id="AL365321">
    <property type="status" value="NOT_ANNOTATED_CDS"/>
    <property type="molecule type" value="Genomic_DNA"/>
</dbReference>
<dbReference type="EMBL" id="BC026155">
    <property type="protein sequence ID" value="AAH26155.1"/>
    <property type="status" value="ALT_INIT"/>
    <property type="molecule type" value="mRNA"/>
</dbReference>
<dbReference type="EMBL" id="CR627402">
    <property type="protein sequence ID" value="CAH10493.1"/>
    <property type="status" value="ALT_SEQ"/>
    <property type="molecule type" value="mRNA"/>
</dbReference>
<dbReference type="CCDS" id="CCDS862.1">
    <molecule id="Q5VWQ0-1"/>
</dbReference>
<dbReference type="RefSeq" id="NP_060834.2">
    <molecule id="Q5VWQ0-1"/>
    <property type="nucleotide sequence ID" value="NM_018364.4"/>
</dbReference>
<dbReference type="RefSeq" id="XP_016857007.1">
    <molecule id="Q5VWQ0-4"/>
    <property type="nucleotide sequence ID" value="XM_017001518.3"/>
</dbReference>
<dbReference type="RefSeq" id="XP_054193137.1">
    <molecule id="Q5VWQ0-4"/>
    <property type="nucleotide sequence ID" value="XM_054337162.1"/>
</dbReference>
<dbReference type="SMR" id="Q5VWQ0"/>
<dbReference type="BioGRID" id="120094">
    <property type="interactions" value="179"/>
</dbReference>
<dbReference type="FunCoup" id="Q5VWQ0">
    <property type="interactions" value="3312"/>
</dbReference>
<dbReference type="IntAct" id="Q5VWQ0">
    <property type="interactions" value="136"/>
</dbReference>
<dbReference type="MINT" id="Q5VWQ0"/>
<dbReference type="STRING" id="9606.ENSP00000261441"/>
<dbReference type="GlyGen" id="Q5VWQ0">
    <property type="glycosylation" value="1 site, 1 O-linked glycan (1 site)"/>
</dbReference>
<dbReference type="iPTMnet" id="Q5VWQ0"/>
<dbReference type="PhosphoSitePlus" id="Q5VWQ0"/>
<dbReference type="BioMuta" id="RSBN1"/>
<dbReference type="DMDM" id="257050986"/>
<dbReference type="jPOST" id="Q5VWQ0"/>
<dbReference type="MassIVE" id="Q5VWQ0"/>
<dbReference type="PaxDb" id="9606-ENSP00000261441"/>
<dbReference type="PeptideAtlas" id="Q5VWQ0"/>
<dbReference type="ProteomicsDB" id="65552">
    <molecule id="Q5VWQ0-1"/>
</dbReference>
<dbReference type="ProteomicsDB" id="65553">
    <molecule id="Q5VWQ0-4"/>
</dbReference>
<dbReference type="Pumba" id="Q5VWQ0"/>
<dbReference type="Antibodypedia" id="46942">
    <property type="antibodies" value="103 antibodies from 20 providers"/>
</dbReference>
<dbReference type="DNASU" id="54665"/>
<dbReference type="Ensembl" id="ENST00000261441.9">
    <molecule id="Q5VWQ0-1"/>
    <property type="protein sequence ID" value="ENSP00000261441.5"/>
    <property type="gene ID" value="ENSG00000081019.14"/>
</dbReference>
<dbReference type="Ensembl" id="ENST00000612242.4">
    <molecule id="Q5VWQ0-1"/>
    <property type="protein sequence ID" value="ENSP00000479490.1"/>
    <property type="gene ID" value="ENSG00000081019.14"/>
</dbReference>
<dbReference type="GeneID" id="54665"/>
<dbReference type="KEGG" id="hsa:54665"/>
<dbReference type="MANE-Select" id="ENST00000261441.9">
    <property type="protein sequence ID" value="ENSP00000261441.5"/>
    <property type="RefSeq nucleotide sequence ID" value="NM_018364.5"/>
    <property type="RefSeq protein sequence ID" value="NP_060834.2"/>
</dbReference>
<dbReference type="UCSC" id="uc001edq.4">
    <molecule id="Q5VWQ0-1"/>
    <property type="organism name" value="human"/>
</dbReference>
<dbReference type="AGR" id="HGNC:25642"/>
<dbReference type="CTD" id="54665"/>
<dbReference type="DisGeNET" id="54665"/>
<dbReference type="GeneCards" id="RSBN1"/>
<dbReference type="HGNC" id="HGNC:25642">
    <property type="gene designation" value="RSBN1"/>
</dbReference>
<dbReference type="HPA" id="ENSG00000081019">
    <property type="expression patterns" value="Low tissue specificity"/>
</dbReference>
<dbReference type="MIM" id="615858">
    <property type="type" value="gene"/>
</dbReference>
<dbReference type="neXtProt" id="NX_Q5VWQ0"/>
<dbReference type="OpenTargets" id="ENSG00000081019"/>
<dbReference type="PharmGKB" id="PA134869532"/>
<dbReference type="VEuPathDB" id="HostDB:ENSG00000081019"/>
<dbReference type="eggNOG" id="KOG4425">
    <property type="taxonomic scope" value="Eukaryota"/>
</dbReference>
<dbReference type="GeneTree" id="ENSGT00390000001969"/>
<dbReference type="InParanoid" id="Q5VWQ0"/>
<dbReference type="OMA" id="SQCMENI"/>
<dbReference type="OrthoDB" id="6020087at2759"/>
<dbReference type="PAN-GO" id="Q5VWQ0">
    <property type="GO annotations" value="1 GO annotation based on evolutionary models"/>
</dbReference>
<dbReference type="PhylomeDB" id="Q5VWQ0"/>
<dbReference type="TreeFam" id="TF323256"/>
<dbReference type="PathwayCommons" id="Q5VWQ0"/>
<dbReference type="SignaLink" id="Q5VWQ0"/>
<dbReference type="BioGRID-ORCS" id="54665">
    <property type="hits" value="18 hits in 1168 CRISPR screens"/>
</dbReference>
<dbReference type="ChiTaRS" id="RSBN1">
    <property type="organism name" value="human"/>
</dbReference>
<dbReference type="GenomeRNAi" id="54665"/>
<dbReference type="Pharos" id="Q5VWQ0">
    <property type="development level" value="Tbio"/>
</dbReference>
<dbReference type="PRO" id="PR:Q5VWQ0"/>
<dbReference type="Proteomes" id="UP000005640">
    <property type="component" value="Chromosome 1"/>
</dbReference>
<dbReference type="RNAct" id="Q5VWQ0">
    <property type="molecule type" value="protein"/>
</dbReference>
<dbReference type="Bgee" id="ENSG00000081019">
    <property type="expression patterns" value="Expressed in caput epididymis and 206 other cell types or tissues"/>
</dbReference>
<dbReference type="ExpressionAtlas" id="Q5VWQ0">
    <property type="expression patterns" value="baseline and differential"/>
</dbReference>
<dbReference type="GO" id="GO:0005634">
    <property type="term" value="C:nucleus"/>
    <property type="evidence" value="ECO:0000318"/>
    <property type="project" value="GO_Central"/>
</dbReference>
<dbReference type="GO" id="GO:0035575">
    <property type="term" value="F:histone H4K20 demethylase activity"/>
    <property type="evidence" value="ECO:0000250"/>
    <property type="project" value="UniProtKB"/>
</dbReference>
<dbReference type="GO" id="GO:0046872">
    <property type="term" value="F:metal ion binding"/>
    <property type="evidence" value="ECO:0007669"/>
    <property type="project" value="UniProtKB-KW"/>
</dbReference>
<dbReference type="InterPro" id="IPR026306">
    <property type="entry name" value="RSBN1/Dpy-21"/>
</dbReference>
<dbReference type="PANTHER" id="PTHR13354:SF8">
    <property type="entry name" value="LYSINE-SPECIFIC DEMETHYLASE 9"/>
    <property type="match status" value="1"/>
</dbReference>
<dbReference type="PANTHER" id="PTHR13354">
    <property type="entry name" value="ROUND SPERMATID BASIC PROTEIN 1"/>
    <property type="match status" value="1"/>
</dbReference>
<keyword id="KW-0025">Alternative splicing</keyword>
<keyword id="KW-0156">Chromatin regulator</keyword>
<keyword id="KW-0223">Dioxygenase</keyword>
<keyword id="KW-0408">Iron</keyword>
<keyword id="KW-1017">Isopeptide bond</keyword>
<keyword id="KW-0479">Metal-binding</keyword>
<keyword id="KW-0539">Nucleus</keyword>
<keyword id="KW-0560">Oxidoreductase</keyword>
<keyword id="KW-0597">Phosphoprotein</keyword>
<keyword id="KW-1267">Proteomics identification</keyword>
<keyword id="KW-1185">Reference proteome</keyword>
<keyword id="KW-0832">Ubl conjugation</keyword>
<protein>
    <recommendedName>
        <fullName evidence="2">Lysine-specific demethylase 9</fullName>
        <shortName evidence="2">KDM9</shortName>
        <ecNumber evidence="2">1.14.11.-</ecNumber>
    </recommendedName>
    <alternativeName>
        <fullName>Round spermatid basic protein 1</fullName>
    </alternativeName>
</protein>
<reference key="1">
    <citation type="journal article" date="2004" name="Nat. Genet.">
        <title>Complete sequencing and characterization of 21,243 full-length human cDNAs.</title>
        <authorList>
            <person name="Ota T."/>
            <person name="Suzuki Y."/>
            <person name="Nishikawa T."/>
            <person name="Otsuki T."/>
            <person name="Sugiyama T."/>
            <person name="Irie R."/>
            <person name="Wakamatsu A."/>
            <person name="Hayashi K."/>
            <person name="Sato H."/>
            <person name="Nagai K."/>
            <person name="Kimura K."/>
            <person name="Makita H."/>
            <person name="Sekine M."/>
            <person name="Obayashi M."/>
            <person name="Nishi T."/>
            <person name="Shibahara T."/>
            <person name="Tanaka T."/>
            <person name="Ishii S."/>
            <person name="Yamamoto J."/>
            <person name="Saito K."/>
            <person name="Kawai Y."/>
            <person name="Isono Y."/>
            <person name="Nakamura Y."/>
            <person name="Nagahari K."/>
            <person name="Murakami K."/>
            <person name="Yasuda T."/>
            <person name="Iwayanagi T."/>
            <person name="Wagatsuma M."/>
            <person name="Shiratori A."/>
            <person name="Sudo H."/>
            <person name="Hosoiri T."/>
            <person name="Kaku Y."/>
            <person name="Kodaira H."/>
            <person name="Kondo H."/>
            <person name="Sugawara M."/>
            <person name="Takahashi M."/>
            <person name="Kanda K."/>
            <person name="Yokoi T."/>
            <person name="Furuya T."/>
            <person name="Kikkawa E."/>
            <person name="Omura Y."/>
            <person name="Abe K."/>
            <person name="Kamihara K."/>
            <person name="Katsuta N."/>
            <person name="Sato K."/>
            <person name="Tanikawa M."/>
            <person name="Yamazaki M."/>
            <person name="Ninomiya K."/>
            <person name="Ishibashi T."/>
            <person name="Yamashita H."/>
            <person name="Murakawa K."/>
            <person name="Fujimori K."/>
            <person name="Tanai H."/>
            <person name="Kimata M."/>
            <person name="Watanabe M."/>
            <person name="Hiraoka S."/>
            <person name="Chiba Y."/>
            <person name="Ishida S."/>
            <person name="Ono Y."/>
            <person name="Takiguchi S."/>
            <person name="Watanabe S."/>
            <person name="Yosida M."/>
            <person name="Hotuta T."/>
            <person name="Kusano J."/>
            <person name="Kanehori K."/>
            <person name="Takahashi-Fujii A."/>
            <person name="Hara H."/>
            <person name="Tanase T.-O."/>
            <person name="Nomura Y."/>
            <person name="Togiya S."/>
            <person name="Komai F."/>
            <person name="Hara R."/>
            <person name="Takeuchi K."/>
            <person name="Arita M."/>
            <person name="Imose N."/>
            <person name="Musashino K."/>
            <person name="Yuuki H."/>
            <person name="Oshima A."/>
            <person name="Sasaki N."/>
            <person name="Aotsuka S."/>
            <person name="Yoshikawa Y."/>
            <person name="Matsunawa H."/>
            <person name="Ichihara T."/>
            <person name="Shiohata N."/>
            <person name="Sano S."/>
            <person name="Moriya S."/>
            <person name="Momiyama H."/>
            <person name="Satoh N."/>
            <person name="Takami S."/>
            <person name="Terashima Y."/>
            <person name="Suzuki O."/>
            <person name="Nakagawa S."/>
            <person name="Senoh A."/>
            <person name="Mizoguchi H."/>
            <person name="Goto Y."/>
            <person name="Shimizu F."/>
            <person name="Wakebe H."/>
            <person name="Hishigaki H."/>
            <person name="Watanabe T."/>
            <person name="Sugiyama A."/>
            <person name="Takemoto M."/>
            <person name="Kawakami B."/>
            <person name="Yamazaki M."/>
            <person name="Watanabe K."/>
            <person name="Kumagai A."/>
            <person name="Itakura S."/>
            <person name="Fukuzumi Y."/>
            <person name="Fujimori Y."/>
            <person name="Komiyama M."/>
            <person name="Tashiro H."/>
            <person name="Tanigami A."/>
            <person name="Fujiwara T."/>
            <person name="Ono T."/>
            <person name="Yamada K."/>
            <person name="Fujii Y."/>
            <person name="Ozaki K."/>
            <person name="Hirao M."/>
            <person name="Ohmori Y."/>
            <person name="Kawabata A."/>
            <person name="Hikiji T."/>
            <person name="Kobatake N."/>
            <person name="Inagaki H."/>
            <person name="Ikema Y."/>
            <person name="Okamoto S."/>
            <person name="Okitani R."/>
            <person name="Kawakami T."/>
            <person name="Noguchi S."/>
            <person name="Itoh T."/>
            <person name="Shigeta K."/>
            <person name="Senba T."/>
            <person name="Matsumura K."/>
            <person name="Nakajima Y."/>
            <person name="Mizuno T."/>
            <person name="Morinaga M."/>
            <person name="Sasaki M."/>
            <person name="Togashi T."/>
            <person name="Oyama M."/>
            <person name="Hata H."/>
            <person name="Watanabe M."/>
            <person name="Komatsu T."/>
            <person name="Mizushima-Sugano J."/>
            <person name="Satoh T."/>
            <person name="Shirai Y."/>
            <person name="Takahashi Y."/>
            <person name="Nakagawa K."/>
            <person name="Okumura K."/>
            <person name="Nagase T."/>
            <person name="Nomura N."/>
            <person name="Kikuchi H."/>
            <person name="Masuho Y."/>
            <person name="Yamashita R."/>
            <person name="Nakai K."/>
            <person name="Yada T."/>
            <person name="Nakamura Y."/>
            <person name="Ohara O."/>
            <person name="Isogai T."/>
            <person name="Sugano S."/>
        </authorList>
    </citation>
    <scope>NUCLEOTIDE SEQUENCE [LARGE SCALE MRNA] (ISOFORM 1)</scope>
    <source>
        <tissue>Embryo</tissue>
        <tissue>Placenta</tissue>
    </source>
</reference>
<reference key="2">
    <citation type="journal article" date="2006" name="Nature">
        <title>The DNA sequence and biological annotation of human chromosome 1.</title>
        <authorList>
            <person name="Gregory S.G."/>
            <person name="Barlow K.F."/>
            <person name="McLay K.E."/>
            <person name="Kaul R."/>
            <person name="Swarbreck D."/>
            <person name="Dunham A."/>
            <person name="Scott C.E."/>
            <person name="Howe K.L."/>
            <person name="Woodfine K."/>
            <person name="Spencer C.C.A."/>
            <person name="Jones M.C."/>
            <person name="Gillson C."/>
            <person name="Searle S."/>
            <person name="Zhou Y."/>
            <person name="Kokocinski F."/>
            <person name="McDonald L."/>
            <person name="Evans R."/>
            <person name="Phillips K."/>
            <person name="Atkinson A."/>
            <person name="Cooper R."/>
            <person name="Jones C."/>
            <person name="Hall R.E."/>
            <person name="Andrews T.D."/>
            <person name="Lloyd C."/>
            <person name="Ainscough R."/>
            <person name="Almeida J.P."/>
            <person name="Ambrose K.D."/>
            <person name="Anderson F."/>
            <person name="Andrew R.W."/>
            <person name="Ashwell R.I.S."/>
            <person name="Aubin K."/>
            <person name="Babbage A.K."/>
            <person name="Bagguley C.L."/>
            <person name="Bailey J."/>
            <person name="Beasley H."/>
            <person name="Bethel G."/>
            <person name="Bird C.P."/>
            <person name="Bray-Allen S."/>
            <person name="Brown J.Y."/>
            <person name="Brown A.J."/>
            <person name="Buckley D."/>
            <person name="Burton J."/>
            <person name="Bye J."/>
            <person name="Carder C."/>
            <person name="Chapman J.C."/>
            <person name="Clark S.Y."/>
            <person name="Clarke G."/>
            <person name="Clee C."/>
            <person name="Cobley V."/>
            <person name="Collier R.E."/>
            <person name="Corby N."/>
            <person name="Coville G.J."/>
            <person name="Davies J."/>
            <person name="Deadman R."/>
            <person name="Dunn M."/>
            <person name="Earthrowl M."/>
            <person name="Ellington A.G."/>
            <person name="Errington H."/>
            <person name="Frankish A."/>
            <person name="Frankland J."/>
            <person name="French L."/>
            <person name="Garner P."/>
            <person name="Garnett J."/>
            <person name="Gay L."/>
            <person name="Ghori M.R.J."/>
            <person name="Gibson R."/>
            <person name="Gilby L.M."/>
            <person name="Gillett W."/>
            <person name="Glithero R.J."/>
            <person name="Grafham D.V."/>
            <person name="Griffiths C."/>
            <person name="Griffiths-Jones S."/>
            <person name="Grocock R."/>
            <person name="Hammond S."/>
            <person name="Harrison E.S.I."/>
            <person name="Hart E."/>
            <person name="Haugen E."/>
            <person name="Heath P.D."/>
            <person name="Holmes S."/>
            <person name="Holt K."/>
            <person name="Howden P.J."/>
            <person name="Hunt A.R."/>
            <person name="Hunt S.E."/>
            <person name="Hunter G."/>
            <person name="Isherwood J."/>
            <person name="James R."/>
            <person name="Johnson C."/>
            <person name="Johnson D."/>
            <person name="Joy A."/>
            <person name="Kay M."/>
            <person name="Kershaw J.K."/>
            <person name="Kibukawa M."/>
            <person name="Kimberley A.M."/>
            <person name="King A."/>
            <person name="Knights A.J."/>
            <person name="Lad H."/>
            <person name="Laird G."/>
            <person name="Lawlor S."/>
            <person name="Leongamornlert D.A."/>
            <person name="Lloyd D.M."/>
            <person name="Loveland J."/>
            <person name="Lovell J."/>
            <person name="Lush M.J."/>
            <person name="Lyne R."/>
            <person name="Martin S."/>
            <person name="Mashreghi-Mohammadi M."/>
            <person name="Matthews L."/>
            <person name="Matthews N.S.W."/>
            <person name="McLaren S."/>
            <person name="Milne S."/>
            <person name="Mistry S."/>
            <person name="Moore M.J.F."/>
            <person name="Nickerson T."/>
            <person name="O'Dell C.N."/>
            <person name="Oliver K."/>
            <person name="Palmeiri A."/>
            <person name="Palmer S.A."/>
            <person name="Parker A."/>
            <person name="Patel D."/>
            <person name="Pearce A.V."/>
            <person name="Peck A.I."/>
            <person name="Pelan S."/>
            <person name="Phelps K."/>
            <person name="Phillimore B.J."/>
            <person name="Plumb R."/>
            <person name="Rajan J."/>
            <person name="Raymond C."/>
            <person name="Rouse G."/>
            <person name="Saenphimmachak C."/>
            <person name="Sehra H.K."/>
            <person name="Sheridan E."/>
            <person name="Shownkeen R."/>
            <person name="Sims S."/>
            <person name="Skuce C.D."/>
            <person name="Smith M."/>
            <person name="Steward C."/>
            <person name="Subramanian S."/>
            <person name="Sycamore N."/>
            <person name="Tracey A."/>
            <person name="Tromans A."/>
            <person name="Van Helmond Z."/>
            <person name="Wall M."/>
            <person name="Wallis J.M."/>
            <person name="White S."/>
            <person name="Whitehead S.L."/>
            <person name="Wilkinson J.E."/>
            <person name="Willey D.L."/>
            <person name="Williams H."/>
            <person name="Wilming L."/>
            <person name="Wray P.W."/>
            <person name="Wu Z."/>
            <person name="Coulson A."/>
            <person name="Vaudin M."/>
            <person name="Sulston J.E."/>
            <person name="Durbin R.M."/>
            <person name="Hubbard T."/>
            <person name="Wooster R."/>
            <person name="Dunham I."/>
            <person name="Carter N.P."/>
            <person name="McVean G."/>
            <person name="Ross M.T."/>
            <person name="Harrow J."/>
            <person name="Olson M.V."/>
            <person name="Beck S."/>
            <person name="Rogers J."/>
            <person name="Bentley D.R."/>
        </authorList>
    </citation>
    <scope>NUCLEOTIDE SEQUENCE [LARGE SCALE GENOMIC DNA]</scope>
</reference>
<reference key="3">
    <citation type="journal article" date="2004" name="Genome Res.">
        <title>The status, quality, and expansion of the NIH full-length cDNA project: the Mammalian Gene Collection (MGC).</title>
        <authorList>
            <consortium name="The MGC Project Team"/>
        </authorList>
    </citation>
    <scope>NUCLEOTIDE SEQUENCE [LARGE SCALE MRNA] OF 39-802 (ISOFORM 4)</scope>
    <source>
        <tissue>Testis</tissue>
    </source>
</reference>
<reference key="4">
    <citation type="journal article" date="2007" name="BMC Genomics">
        <title>The full-ORF clone resource of the German cDNA consortium.</title>
        <authorList>
            <person name="Bechtel S."/>
            <person name="Rosenfelder H."/>
            <person name="Duda A."/>
            <person name="Schmidt C.P."/>
            <person name="Ernst U."/>
            <person name="Wellenreuther R."/>
            <person name="Mehrle A."/>
            <person name="Schuster C."/>
            <person name="Bahr A."/>
            <person name="Bloecker H."/>
            <person name="Heubner D."/>
            <person name="Hoerlein A."/>
            <person name="Michel G."/>
            <person name="Wedler H."/>
            <person name="Koehrer K."/>
            <person name="Ottenwaelder B."/>
            <person name="Poustka A."/>
            <person name="Wiemann S."/>
            <person name="Schupp I."/>
        </authorList>
    </citation>
    <scope>NUCLEOTIDE SEQUENCE [LARGE SCALE MRNA] OF 47-802 (ISOFORM 1)</scope>
    <source>
        <tissue>Liver tumor</tissue>
    </source>
</reference>
<reference key="5">
    <citation type="journal article" date="2010" name="Sci. Signal.">
        <title>Quantitative phosphoproteomics reveals widespread full phosphorylation site occupancy during mitosis.</title>
        <authorList>
            <person name="Olsen J.V."/>
            <person name="Vermeulen M."/>
            <person name="Santamaria A."/>
            <person name="Kumar C."/>
            <person name="Miller M.L."/>
            <person name="Jensen L.J."/>
            <person name="Gnad F."/>
            <person name="Cox J."/>
            <person name="Jensen T.S."/>
            <person name="Nigg E.A."/>
            <person name="Brunak S."/>
            <person name="Mann M."/>
        </authorList>
    </citation>
    <scope>PHOSPHORYLATION [LARGE SCALE ANALYSIS] AT SER-81</scope>
    <scope>IDENTIFICATION BY MASS SPECTROMETRY [LARGE SCALE ANALYSIS]</scope>
    <source>
        <tissue>Cervix carcinoma</tissue>
    </source>
</reference>
<reference key="6">
    <citation type="journal article" date="2011" name="BMC Syst. Biol.">
        <title>Initial characterization of the human central proteome.</title>
        <authorList>
            <person name="Burkard T.R."/>
            <person name="Planyavsky M."/>
            <person name="Kaupe I."/>
            <person name="Breitwieser F.P."/>
            <person name="Buerckstuemmer T."/>
            <person name="Bennett K.L."/>
            <person name="Superti-Furga G."/>
            <person name="Colinge J."/>
        </authorList>
    </citation>
    <scope>IDENTIFICATION BY MASS SPECTROMETRY [LARGE SCALE ANALYSIS]</scope>
</reference>
<reference key="7">
    <citation type="journal article" date="2015" name="Cell Rep.">
        <title>SUMO-2 orchestrates chromatin modifiers in response to DNA damage.</title>
        <authorList>
            <person name="Hendriks I.A."/>
            <person name="Treffers L.W."/>
            <person name="Verlaan-de Vries M."/>
            <person name="Olsen J.V."/>
            <person name="Vertegaal A.C."/>
        </authorList>
    </citation>
    <scope>SUMOYLATION [LARGE SCALE ANALYSIS] AT LYS-781</scope>
    <scope>IDENTIFICATION BY MASS SPECTROMETRY [LARGE SCALE ANALYSIS]</scope>
</reference>
<reference key="8">
    <citation type="journal article" date="2017" name="Nat. Struct. Mol. Biol.">
        <title>Site-specific mapping of the human SUMO proteome reveals co-modification with phosphorylation.</title>
        <authorList>
            <person name="Hendriks I.A."/>
            <person name="Lyon D."/>
            <person name="Young C."/>
            <person name="Jensen L.J."/>
            <person name="Vertegaal A.C."/>
            <person name="Nielsen M.L."/>
        </authorList>
    </citation>
    <scope>SUMOYLATION [LARGE SCALE ANALYSIS] AT LYS-290; LYS-313; LYS-740 AND LYS-781</scope>
    <scope>IDENTIFICATION BY MASS SPECTROMETRY [LARGE SCALE ANALYSIS]</scope>
</reference>
<accession>Q5VWQ0</accession>
<accession>A8K937</accession>
<accession>Q6AI21</accession>
<accession>Q8TC33</accession>
<accession>Q9HA80</accession>
<accession>Q9NUP6</accession>
<proteinExistence type="evidence at protein level"/>